<gene>
    <name type="primary">vsr</name>
    <name evidence="3" type="synonym">hpaIIV</name>
</gene>
<comment type="function">
    <text evidence="1">May nick HpaII sequences that contain T/G mispairs resulting from m5C-deamination. If unrepaired, these mismatches can lead to C-to-T transition mutations. The very short patch (VSP) repair process counteracts the mutagenic process by repairing the mismatches in favor of the G-containing strand. This enzyme is an endonuclease that nicks double-stranded DNA within the sequence CTGG next to the thymidine residue that is mismatched to 2'-deoxyguanosine. The incision is mismatch-dependent and strand-specific.</text>
</comment>
<comment type="similarity">
    <text evidence="4">Belongs to the Vsr family.</text>
</comment>
<dbReference type="EC" id="3.1.-.-"/>
<dbReference type="EMBL" id="L17342">
    <property type="protein sequence ID" value="AAA20480.1"/>
    <property type="molecule type" value="Genomic_DNA"/>
</dbReference>
<dbReference type="SMR" id="P36434"/>
<dbReference type="REBASE" id="162024">
    <property type="entry name" value="V.BsuBS38ORF4087P"/>
</dbReference>
<dbReference type="REBASE" id="203434">
    <property type="entry name" value="V.Bam1267ORF4054P"/>
</dbReference>
<dbReference type="REBASE" id="3659">
    <property type="entry name" value="V.HpaIIP"/>
</dbReference>
<dbReference type="GO" id="GO:0004519">
    <property type="term" value="F:endonuclease activity"/>
    <property type="evidence" value="ECO:0007669"/>
    <property type="project" value="UniProtKB-KW"/>
</dbReference>
<dbReference type="GO" id="GO:0009307">
    <property type="term" value="P:DNA restriction-modification system"/>
    <property type="evidence" value="ECO:0007669"/>
    <property type="project" value="UniProtKB-KW"/>
</dbReference>
<dbReference type="GO" id="GO:0006298">
    <property type="term" value="P:mismatch repair"/>
    <property type="evidence" value="ECO:0007669"/>
    <property type="project" value="InterPro"/>
</dbReference>
<dbReference type="CDD" id="cd00221">
    <property type="entry name" value="Vsr"/>
    <property type="match status" value="1"/>
</dbReference>
<dbReference type="Gene3D" id="3.40.960.10">
    <property type="entry name" value="VSR Endonuclease"/>
    <property type="match status" value="1"/>
</dbReference>
<dbReference type="InterPro" id="IPR004603">
    <property type="entry name" value="DNA_mismatch_endonuc_vsr"/>
</dbReference>
<dbReference type="InterPro" id="IPR007569">
    <property type="entry name" value="DUF559"/>
</dbReference>
<dbReference type="InterPro" id="IPR011335">
    <property type="entry name" value="Restrct_endonuc-II-like"/>
</dbReference>
<dbReference type="NCBIfam" id="TIGR00632">
    <property type="entry name" value="vsr"/>
    <property type="match status" value="1"/>
</dbReference>
<dbReference type="Pfam" id="PF04480">
    <property type="entry name" value="DUF559"/>
    <property type="match status" value="1"/>
</dbReference>
<dbReference type="Pfam" id="PF03852">
    <property type="entry name" value="Vsr"/>
    <property type="match status" value="1"/>
</dbReference>
<dbReference type="PIRSF" id="PIRSF018267">
    <property type="entry name" value="VSR_endonuc"/>
    <property type="match status" value="1"/>
</dbReference>
<dbReference type="SUPFAM" id="SSF52980">
    <property type="entry name" value="Restriction endonuclease-like"/>
    <property type="match status" value="1"/>
</dbReference>
<keyword id="KW-0227">DNA damage</keyword>
<keyword id="KW-0234">DNA repair</keyword>
<keyword id="KW-0255">Endonuclease</keyword>
<keyword id="KW-0378">Hydrolase</keyword>
<keyword id="KW-0540">Nuclease</keyword>
<keyword id="KW-0680">Restriction system</keyword>
<proteinExistence type="inferred from homology"/>
<evidence type="ECO:0000250" key="1">
    <source>
        <dbReference type="UniProtKB" id="P09184"/>
    </source>
</evidence>
<evidence type="ECO:0000303" key="2">
    <source>
    </source>
</evidence>
<evidence type="ECO:0000303" key="3">
    <source>
    </source>
</evidence>
<evidence type="ECO:0000305" key="4"/>
<feature type="chain" id="PRO_0000200290" description="Type II nicking enzyme V.HpaIIP">
    <location>
        <begin position="1"/>
        <end position="141"/>
    </location>
</feature>
<sequence>MDKLTPEQRKKCMKASSKNKGTKPELLLAKYLWALGLRYRKNDRSIFGTPDLSFKRYKIAIFIDGEFWHGKDWDIRKYDIKSNKDFWISKIEHNMNRDKKVNDYLISNGWVIFRFWGKDVLKNPEKFSLEIQKAIYERCVR</sequence>
<reference key="1">
    <citation type="journal article" date="1994" name="Gene">
        <title>Organization and sequence of the HpaII restriction-modification system and adjacent genes.</title>
        <authorList>
            <person name="Kulakauskas S."/>
            <person name="Barsomian J.M."/>
            <person name="Lubys A."/>
            <person name="Roberts R.J."/>
            <person name="Wilson G.G."/>
        </authorList>
    </citation>
    <scope>NUCLEOTIDE SEQUENCE [GENOMIC DNA]</scope>
</reference>
<reference key="2">
    <citation type="journal article" date="2003" name="Nucleic Acids Res.">
        <title>A nomenclature for restriction enzymes, DNA methyltransferases, homing endonucleases and their genes.</title>
        <authorList>
            <person name="Roberts R.J."/>
            <person name="Belfort M."/>
            <person name="Bestor T."/>
            <person name="Bhagwat A.S."/>
            <person name="Bickle T.A."/>
            <person name="Bitinaite J."/>
            <person name="Blumenthal R.M."/>
            <person name="Degtyarev S.K."/>
            <person name="Dryden D.T."/>
            <person name="Dybvig K."/>
            <person name="Firman K."/>
            <person name="Gromova E.S."/>
            <person name="Gumport R.I."/>
            <person name="Halford S.E."/>
            <person name="Hattman S."/>
            <person name="Heitman J."/>
            <person name="Hornby D.P."/>
            <person name="Janulaitis A."/>
            <person name="Jeltsch A."/>
            <person name="Josephsen J."/>
            <person name="Kiss A."/>
            <person name="Klaenhammer T.R."/>
            <person name="Kobayashi I."/>
            <person name="Kong H."/>
            <person name="Krueger D.H."/>
            <person name="Lacks S."/>
            <person name="Marinus M.G."/>
            <person name="Miyahara M."/>
            <person name="Morgan R.D."/>
            <person name="Murray N.E."/>
            <person name="Nagaraja V."/>
            <person name="Piekarowicz A."/>
            <person name="Pingoud A."/>
            <person name="Raleigh E."/>
            <person name="Rao D.N."/>
            <person name="Reich N."/>
            <person name="Repin V.E."/>
            <person name="Selker E.U."/>
            <person name="Shaw P.C."/>
            <person name="Stein D.C."/>
            <person name="Stoddard B.L."/>
            <person name="Szybalski W."/>
            <person name="Trautner T.A."/>
            <person name="Van Etten J.L."/>
            <person name="Vitor J.M."/>
            <person name="Wilson G.G."/>
            <person name="Xu S.Y."/>
        </authorList>
    </citation>
    <scope>NOMENCLATURE</scope>
</reference>
<name>VSH2_HAEPA</name>
<accession>P36434</accession>
<protein>
    <recommendedName>
        <fullName evidence="2">Type II nicking enzyme V.HpaIIP</fullName>
        <shortName>V.HpaII</shortName>
        <ecNumber>3.1.-.-</ecNumber>
    </recommendedName>
    <alternativeName>
        <fullName>HpaII very short patch repair endonuclease</fullName>
    </alternativeName>
</protein>
<organism>
    <name type="scientific">Haemophilus parainfluenzae</name>
    <dbReference type="NCBI Taxonomy" id="729"/>
    <lineage>
        <taxon>Bacteria</taxon>
        <taxon>Pseudomonadati</taxon>
        <taxon>Pseudomonadota</taxon>
        <taxon>Gammaproteobacteria</taxon>
        <taxon>Pasteurellales</taxon>
        <taxon>Pasteurellaceae</taxon>
        <taxon>Haemophilus</taxon>
    </lineage>
</organism>